<gene>
    <name type="primary">RPS23</name>
</gene>
<sequence length="143" mass="15817">MGKCRGLRTARKLRSHRRDHKWHDKQYKKAHLGTALKANPFGGASHAKGIVLEKVGVEAKQPNSAIRKCVRVQLIKNGKKITAFVPNDGCLNFIEENDEVLVAGFGRKGHAVGDIPGVRFKVVKVANVSLLALYKGKKERPRS</sequence>
<feature type="chain" id="PRO_0000146459" description="Small ribosomal subunit protein uS12">
    <location>
        <begin position="1"/>
        <end position="143"/>
    </location>
</feature>
<feature type="region of interest" description="Disordered" evidence="3">
    <location>
        <begin position="1"/>
        <end position="26"/>
    </location>
</feature>
<feature type="compositionally biased region" description="Basic residues" evidence="3">
    <location>
        <begin position="1"/>
        <end position="20"/>
    </location>
</feature>
<feature type="modified residue" description="N6-succinyllysine" evidence="2">
    <location>
        <position position="54"/>
    </location>
</feature>
<feature type="modified residue" description="3-hydroxyproline" evidence="1">
    <location>
        <position position="62"/>
    </location>
</feature>
<feature type="modified residue" description="N6-acetyllysine" evidence="1">
    <location>
        <position position="135"/>
    </location>
</feature>
<feature type="cross-link" description="Glycyl lysine isopeptide (Lys-Gly) (interchain with G-Cter in SUMO2)" evidence="1">
    <location>
        <position position="37"/>
    </location>
</feature>
<comment type="function">
    <text evidence="1 4">Component of the ribosome, a large ribonucleoprotein complex responsible for the synthesis of proteins in the cell (PubMed:24930395). The small ribosomal subunit (SSU) binds messenger RNAs (mRNAs) and translates the encoded message by selecting cognate aminoacyl-transfer RNA (tRNA) molecules. The large subunit (LSU) contains the ribosomal catalytic site termed the peptidyl transferase center (PTC), which catalyzes the formation of peptide bonds, thereby polymerizing the amino acids delivered by tRNAs into a polypeptide chain. The nascent polypeptides leave the ribosome through a tunnel in the LSU and interact with protein factors that function in enzymatic processing, targeting, and the membrane insertion of nascent chains at the exit of the ribosomal tunnel. Plays an important role in translational accuracy. Part of the small subunit (SSU) processome, first precursor of the small eukaryotic ribosomal subunit. During the assembly of the SSU processome in the nucleolus, many ribosome biogenesis factors, an RNA chaperone and ribosomal proteins associate with the nascent pre-rRNA and work in concert to generate RNA folding, modifications, rearrangements and cleavage as well as targeted degradation of pre-ribosomal RNA by the RNA exosome (By similarity).</text>
</comment>
<comment type="subunit">
    <text evidence="1 4">Component of the 40S small ribosomal subunit (PubMed:24930395). Part of the small subunit (SSU) processome, composed of more than 70 proteins and the RNA chaperone small nucleolar RNA (snoRNA) U3 (By similarity).</text>
</comment>
<comment type="subunit">
    <text evidence="5">(Microbial infection) Interacts with the African swine fever virus (ASFV) ubiquitin-conjugating enzyme UBCv1; this interaction probably plays a role in the viral regulation of host protein synthesis.</text>
</comment>
<comment type="subcellular location">
    <subcellularLocation>
        <location evidence="1">Cytoplasm</location>
        <location evidence="1">Cytosol</location>
    </subcellularLocation>
    <subcellularLocation>
        <location evidence="4">Cytoplasm</location>
    </subcellularLocation>
    <subcellularLocation>
        <location evidence="4">Rough endoplasmic reticulum</location>
    </subcellularLocation>
    <subcellularLocation>
        <location evidence="1">Nucleus</location>
        <location evidence="1">Nucleolus</location>
    </subcellularLocation>
    <text evidence="1 4">Detected on cytosolic polysomes (By similarity). Detected in ribosomes that are associated with the rough endoplasmic reticulum (PubMed:24930395).</text>
</comment>
<comment type="PTM">
    <text evidence="1">Hydroxylation at Pro-62 affects translation termination efficiency.</text>
</comment>
<comment type="similarity">
    <text evidence="6">Belongs to the universal ribosomal protein uS12 family.</text>
</comment>
<accession>Q6SA96</accession>
<reference key="1">
    <citation type="submission" date="2003-11" db="EMBL/GenBank/DDBJ databases">
        <title>Cloning and expression of ribosomal protein S23 in pig.</title>
        <authorList>
            <person name="Tian X."/>
            <person name="Li J."/>
            <person name="Chen Y."/>
        </authorList>
    </citation>
    <scope>NUCLEOTIDE SEQUENCE [MRNA]</scope>
    <source>
        <tissue>Longissimus muscle</tissue>
    </source>
</reference>
<reference key="2">
    <citation type="journal article" date="2020" name="Front. Microbiol.">
        <title>African Swine Fever Virus Ubiquitin-Conjugating Enzyme Interacts With Host Translation Machinery to Regulate the Host Protein Synthesis.</title>
        <authorList>
            <person name="Barrado-Gil L."/>
            <person name="Del Puerto A."/>
            <person name="Munoz-Moreno R."/>
            <person name="Galindo I."/>
            <person name="Cuesta-Geijo M.A."/>
            <person name="Urquiza J."/>
            <person name="Nistal-Villan E."/>
            <person name="Maluquer de Motes C."/>
            <person name="Alonso C."/>
        </authorList>
    </citation>
    <scope>INTERACTION WITH ASFV UBCV1 (MICROBIAL INFECTION)</scope>
</reference>
<reference evidence="7 8" key="3">
    <citation type="journal article" date="2014" name="Cell">
        <title>Structure of the mammalian ribosome-Sec61 complex to 3.4 A resolution.</title>
        <authorList>
            <person name="Voorhees R.M."/>
            <person name="Fernandez I.S."/>
            <person name="Scheres S.H."/>
            <person name="Hegde R.S."/>
        </authorList>
    </citation>
    <scope>STRUCTURE BY ELECTRON MICROSCOPY (3.50 ANGSTROMS)</scope>
    <scope>FUNCTION</scope>
    <scope>SUBCELLULAR LOCATION</scope>
    <scope>SUBUNIT</scope>
</reference>
<evidence type="ECO:0000250" key="1">
    <source>
        <dbReference type="UniProtKB" id="P62266"/>
    </source>
</evidence>
<evidence type="ECO:0000250" key="2">
    <source>
        <dbReference type="UniProtKB" id="P62267"/>
    </source>
</evidence>
<evidence type="ECO:0000256" key="3">
    <source>
        <dbReference type="SAM" id="MobiDB-lite"/>
    </source>
</evidence>
<evidence type="ECO:0000269" key="4">
    <source>
    </source>
</evidence>
<evidence type="ECO:0000269" key="5">
    <source>
    </source>
</evidence>
<evidence type="ECO:0000305" key="6"/>
<evidence type="ECO:0007744" key="7">
    <source>
        <dbReference type="PDB" id="3J7P"/>
    </source>
</evidence>
<evidence type="ECO:0007744" key="8">
    <source>
        <dbReference type="PDB" id="3J7R"/>
    </source>
</evidence>
<dbReference type="EMBL" id="AY461380">
    <property type="protein sequence ID" value="AAR22386.1"/>
    <property type="molecule type" value="mRNA"/>
</dbReference>
<dbReference type="RefSeq" id="NP_998929.1">
    <property type="nucleotide sequence ID" value="NM_213764.1"/>
</dbReference>
<dbReference type="PDB" id="3J7P">
    <property type="method" value="EM"/>
    <property type="resolution" value="3.50 A"/>
    <property type="chains" value="SX=1-143"/>
</dbReference>
<dbReference type="PDB" id="3J7R">
    <property type="method" value="EM"/>
    <property type="resolution" value="3.90 A"/>
    <property type="chains" value="SX=1-143"/>
</dbReference>
<dbReference type="PDBsum" id="3J7P"/>
<dbReference type="PDBsum" id="3J7R"/>
<dbReference type="SMR" id="Q6SA96"/>
<dbReference type="FunCoup" id="Q6SA96">
    <property type="interactions" value="356"/>
</dbReference>
<dbReference type="STRING" id="9823.ENSSSCP00000015028"/>
<dbReference type="PaxDb" id="9823-ENSSSCP00000015028"/>
<dbReference type="PeptideAtlas" id="Q6SA96"/>
<dbReference type="GeneID" id="396638"/>
<dbReference type="KEGG" id="ssc:396638"/>
<dbReference type="CTD" id="6228"/>
<dbReference type="eggNOG" id="KOG1749">
    <property type="taxonomic scope" value="Eukaryota"/>
</dbReference>
<dbReference type="InParanoid" id="Q6SA96"/>
<dbReference type="OrthoDB" id="9758353at2759"/>
<dbReference type="Proteomes" id="UP000008227">
    <property type="component" value="Unplaced"/>
</dbReference>
<dbReference type="Proteomes" id="UP000314985">
    <property type="component" value="Unplaced"/>
</dbReference>
<dbReference type="Proteomes" id="UP000694570">
    <property type="component" value="Unplaced"/>
</dbReference>
<dbReference type="Proteomes" id="UP000694571">
    <property type="component" value="Unplaced"/>
</dbReference>
<dbReference type="Proteomes" id="UP000694720">
    <property type="component" value="Unplaced"/>
</dbReference>
<dbReference type="Proteomes" id="UP000694722">
    <property type="component" value="Unplaced"/>
</dbReference>
<dbReference type="Proteomes" id="UP000694723">
    <property type="component" value="Unplaced"/>
</dbReference>
<dbReference type="Proteomes" id="UP000694724">
    <property type="component" value="Unplaced"/>
</dbReference>
<dbReference type="Proteomes" id="UP000694725">
    <property type="component" value="Unplaced"/>
</dbReference>
<dbReference type="Proteomes" id="UP000694726">
    <property type="component" value="Unplaced"/>
</dbReference>
<dbReference type="Proteomes" id="UP000694727">
    <property type="component" value="Unplaced"/>
</dbReference>
<dbReference type="Proteomes" id="UP000694728">
    <property type="component" value="Unplaced"/>
</dbReference>
<dbReference type="GO" id="GO:0098556">
    <property type="term" value="C:cytoplasmic side of rough endoplasmic reticulum membrane"/>
    <property type="evidence" value="ECO:0000314"/>
    <property type="project" value="UniProtKB"/>
</dbReference>
<dbReference type="GO" id="GO:0022627">
    <property type="term" value="C:cytosolic small ribosomal subunit"/>
    <property type="evidence" value="ECO:0000314"/>
    <property type="project" value="UniProtKB"/>
</dbReference>
<dbReference type="GO" id="GO:0005730">
    <property type="term" value="C:nucleolus"/>
    <property type="evidence" value="ECO:0007669"/>
    <property type="project" value="UniProtKB-SubCell"/>
</dbReference>
<dbReference type="GO" id="GO:0005840">
    <property type="term" value="C:ribosome"/>
    <property type="evidence" value="ECO:0000318"/>
    <property type="project" value="GO_Central"/>
</dbReference>
<dbReference type="GO" id="GO:0032040">
    <property type="term" value="C:small-subunit processome"/>
    <property type="evidence" value="ECO:0000250"/>
    <property type="project" value="UniProtKB"/>
</dbReference>
<dbReference type="GO" id="GO:0003735">
    <property type="term" value="F:structural constituent of ribosome"/>
    <property type="evidence" value="ECO:0000250"/>
    <property type="project" value="UniProtKB"/>
</dbReference>
<dbReference type="GO" id="GO:0002181">
    <property type="term" value="P:cytoplasmic translation"/>
    <property type="evidence" value="ECO:0000250"/>
    <property type="project" value="UniProtKB"/>
</dbReference>
<dbReference type="GO" id="GO:1990145">
    <property type="term" value="P:maintenance of translational fidelity"/>
    <property type="evidence" value="ECO:0000250"/>
    <property type="project" value="UniProtKB"/>
</dbReference>
<dbReference type="GO" id="GO:0042274">
    <property type="term" value="P:ribosomal small subunit biogenesis"/>
    <property type="evidence" value="ECO:0000250"/>
    <property type="project" value="UniProtKB"/>
</dbReference>
<dbReference type="GO" id="GO:0006412">
    <property type="term" value="P:translation"/>
    <property type="evidence" value="ECO:0000250"/>
    <property type="project" value="UniProtKB"/>
</dbReference>
<dbReference type="CDD" id="cd03367">
    <property type="entry name" value="Ribosomal_S23"/>
    <property type="match status" value="1"/>
</dbReference>
<dbReference type="FunFam" id="2.40.50.140:FF:000007">
    <property type="entry name" value="40S ribosomal protein S23"/>
    <property type="match status" value="1"/>
</dbReference>
<dbReference type="Gene3D" id="2.40.50.140">
    <property type="entry name" value="Nucleic acid-binding proteins"/>
    <property type="match status" value="1"/>
</dbReference>
<dbReference type="InterPro" id="IPR012340">
    <property type="entry name" value="NA-bd_OB-fold"/>
</dbReference>
<dbReference type="InterPro" id="IPR006032">
    <property type="entry name" value="Ribosomal_uS12"/>
</dbReference>
<dbReference type="InterPro" id="IPR005680">
    <property type="entry name" value="Ribosomal_uS12_euk/arc"/>
</dbReference>
<dbReference type="NCBIfam" id="NF003254">
    <property type="entry name" value="PRK04211.1"/>
    <property type="match status" value="1"/>
</dbReference>
<dbReference type="NCBIfam" id="TIGR00982">
    <property type="entry name" value="uS12_E_A"/>
    <property type="match status" value="1"/>
</dbReference>
<dbReference type="PANTHER" id="PTHR11652">
    <property type="entry name" value="30S RIBOSOMAL PROTEIN S12 FAMILY MEMBER"/>
    <property type="match status" value="1"/>
</dbReference>
<dbReference type="Pfam" id="PF00164">
    <property type="entry name" value="Ribosom_S12_S23"/>
    <property type="match status" value="1"/>
</dbReference>
<dbReference type="PIRSF" id="PIRSF002133">
    <property type="entry name" value="Ribosomal_S12/S23"/>
    <property type="match status" value="1"/>
</dbReference>
<dbReference type="SUPFAM" id="SSF50249">
    <property type="entry name" value="Nucleic acid-binding proteins"/>
    <property type="match status" value="1"/>
</dbReference>
<dbReference type="PROSITE" id="PS00055">
    <property type="entry name" value="RIBOSOMAL_S12"/>
    <property type="match status" value="1"/>
</dbReference>
<keyword id="KW-0002">3D-structure</keyword>
<keyword id="KW-0007">Acetylation</keyword>
<keyword id="KW-0963">Cytoplasm</keyword>
<keyword id="KW-0256">Endoplasmic reticulum</keyword>
<keyword id="KW-0379">Hydroxylation</keyword>
<keyword id="KW-1017">Isopeptide bond</keyword>
<keyword id="KW-0539">Nucleus</keyword>
<keyword id="KW-1185">Reference proteome</keyword>
<keyword id="KW-0687">Ribonucleoprotein</keyword>
<keyword id="KW-0689">Ribosomal protein</keyword>
<keyword id="KW-0832">Ubl conjugation</keyword>
<name>RS23_PIG</name>
<protein>
    <recommendedName>
        <fullName evidence="6">Small ribosomal subunit protein uS12</fullName>
    </recommendedName>
    <alternativeName>
        <fullName>40S ribosomal protein S23</fullName>
    </alternativeName>
</protein>
<proteinExistence type="evidence at protein level"/>
<organism>
    <name type="scientific">Sus scrofa</name>
    <name type="common">Pig</name>
    <dbReference type="NCBI Taxonomy" id="9823"/>
    <lineage>
        <taxon>Eukaryota</taxon>
        <taxon>Metazoa</taxon>
        <taxon>Chordata</taxon>
        <taxon>Craniata</taxon>
        <taxon>Vertebrata</taxon>
        <taxon>Euteleostomi</taxon>
        <taxon>Mammalia</taxon>
        <taxon>Eutheria</taxon>
        <taxon>Laurasiatheria</taxon>
        <taxon>Artiodactyla</taxon>
        <taxon>Suina</taxon>
        <taxon>Suidae</taxon>
        <taxon>Sus</taxon>
    </lineage>
</organism>